<sequence>MWMLAALLLLVPRSGKAATLEKPVLTLHPPWTTIFKGERVTLRCDGYHPLLLELRPISTLWYLGHVLLPSHKKSIEVQAPGVYRCQTRGAPVSDPIHLSVSNDWLILQVPYAAVFEGEPLVMRCRGWYDKVVYKLHYYHDGQAVRYFHSSTNYTVLQARASDSGHYQCSGTMRIPVESAPMFSSKVAVTVQELFQTPVLRTLSPQEARGRVVLRCETRLHPQKRDTPLQFAFYKYSRPVRRFDWGAEYTVPESEVEELESYWCEAATTSRSVRKRSPWLQLPGRGPVLDLASTTAPVAQAAALGPGDKPLSFRKTPVSRSVQSVTSIPNSTFAGLQFPAGHVATAGPHACAPLPASAEQSREALQPKVDLLLREMQLLKGLLSRVVLGLKDPQALHELTETPETPNSHVTVNPATPETTVMEGRVDS</sequence>
<name>FCRLB_MOUSE</name>
<organism>
    <name type="scientific">Mus musculus</name>
    <name type="common">Mouse</name>
    <dbReference type="NCBI Taxonomy" id="10090"/>
    <lineage>
        <taxon>Eukaryota</taxon>
        <taxon>Metazoa</taxon>
        <taxon>Chordata</taxon>
        <taxon>Craniata</taxon>
        <taxon>Vertebrata</taxon>
        <taxon>Euteleostomi</taxon>
        <taxon>Mammalia</taxon>
        <taxon>Eutheria</taxon>
        <taxon>Euarchontoglires</taxon>
        <taxon>Glires</taxon>
        <taxon>Rodentia</taxon>
        <taxon>Myomorpha</taxon>
        <taxon>Muroidea</taxon>
        <taxon>Muridae</taxon>
        <taxon>Murinae</taxon>
        <taxon>Mus</taxon>
        <taxon>Mus</taxon>
    </lineage>
</organism>
<evidence type="ECO:0000250" key="1">
    <source>
        <dbReference type="UniProtKB" id="Q6BAA4"/>
    </source>
</evidence>
<evidence type="ECO:0000255" key="2"/>
<evidence type="ECO:0000255" key="3">
    <source>
        <dbReference type="PROSITE-ProRule" id="PRU00114"/>
    </source>
</evidence>
<evidence type="ECO:0000256" key="4">
    <source>
        <dbReference type="SAM" id="MobiDB-lite"/>
    </source>
</evidence>
<evidence type="ECO:0000269" key="5">
    <source>
    </source>
</evidence>
<evidence type="ECO:0000269" key="6">
    <source>
    </source>
</evidence>
<evidence type="ECO:0000305" key="7"/>
<gene>
    <name type="primary">Fcrlb</name>
    <name type="synonym">Fcrl2</name>
    <name type="synonym">Fcrlm2</name>
    <name type="synonym">Fcry</name>
    <name type="synonym">Freb2</name>
</gene>
<comment type="subcellular location">
    <subcellularLocation>
        <location evidence="1">Cytoplasm</location>
    </subcellularLocation>
    <subcellularLocation>
        <location evidence="1">Endoplasmic reticulum</location>
    </subcellularLocation>
    <text evidence="1">Seems not to be secreted.</text>
</comment>
<comment type="tissue specificity">
    <text evidence="5 6">Expressed at low levels. Expressed in B-lymphocytes. Detected in spleen, lymph node, kidney, lung and brain.</text>
</comment>
<comment type="induction">
    <text evidence="6">Up-regulated upon cell cycle arrest.</text>
</comment>
<feature type="signal peptide" evidence="2">
    <location>
        <begin position="1"/>
        <end position="17"/>
    </location>
</feature>
<feature type="chain" id="PRO_0000332993" description="Fc receptor-like B">
    <location>
        <begin position="18"/>
        <end position="427"/>
    </location>
</feature>
<feature type="domain" description="Ig-like C2-type 1">
    <location>
        <begin position="23"/>
        <end position="101"/>
    </location>
</feature>
<feature type="domain" description="Ig-like C2-type 2">
    <location>
        <begin position="103"/>
        <end position="189"/>
    </location>
</feature>
<feature type="region of interest" description="Disordered" evidence="4">
    <location>
        <begin position="401"/>
        <end position="427"/>
    </location>
</feature>
<feature type="compositionally biased region" description="Polar residues" evidence="4">
    <location>
        <begin position="401"/>
        <end position="418"/>
    </location>
</feature>
<feature type="glycosylation site" description="N-linked (GlcNAc...) asparagine" evidence="2">
    <location>
        <position position="152"/>
    </location>
</feature>
<feature type="disulfide bond" evidence="3">
    <location>
        <begin position="44"/>
        <end position="85"/>
    </location>
</feature>
<feature type="disulfide bond" evidence="3">
    <location>
        <begin position="124"/>
        <end position="168"/>
    </location>
</feature>
<feature type="sequence conflict" description="In Ref. 1; AAZ23789 and 2; AAS82875." evidence="7" ref="1 2">
    <original>V</original>
    <variation>I</variation>
    <location>
        <position position="24"/>
    </location>
</feature>
<feature type="sequence conflict" description="In Ref. 1; AAZ23789 and 2; AAS82875." evidence="7" ref="1 2">
    <original>H</original>
    <variation>R</variation>
    <location>
        <position position="341"/>
    </location>
</feature>
<keyword id="KW-0963">Cytoplasm</keyword>
<keyword id="KW-1015">Disulfide bond</keyword>
<keyword id="KW-0256">Endoplasmic reticulum</keyword>
<keyword id="KW-0325">Glycoprotein</keyword>
<keyword id="KW-0393">Immunoglobulin domain</keyword>
<keyword id="KW-1185">Reference proteome</keyword>
<keyword id="KW-0677">Repeat</keyword>
<keyword id="KW-0732">Signal</keyword>
<reference key="1">
    <citation type="journal article" date="2005" name="Gene">
        <title>FcRY, an Fc receptor related gene differentially expressed during B lymphocyte development and activation.</title>
        <authorList>
            <person name="Masuda K."/>
            <person name="Davis R.S."/>
            <person name="Maruyama T."/>
            <person name="Zhang J."/>
            <person name="He T."/>
            <person name="Cooper M.D."/>
            <person name="O-Wang J."/>
            <person name="Burrows P.D."/>
        </authorList>
    </citation>
    <scope>NUCLEOTIDE SEQUENCE [MRNA]</scope>
    <scope>TISSUE SPECIFICITY</scope>
    <scope>INDUCTION</scope>
    <source>
        <strain>C57BL/6J</strain>
        <tissue>Spleen</tissue>
    </source>
</reference>
<reference key="2">
    <citation type="journal article" date="2005" name="Genes Immun.">
        <title>A new Fc receptor homolog, FREB2, found in germinal center B cells.</title>
        <authorList>
            <person name="Wilson T.J."/>
            <person name="Colonna M."/>
        </authorList>
    </citation>
    <scope>NUCLEOTIDE SEQUENCE [MRNA]</scope>
    <scope>TISSUE SPECIFICITY</scope>
    <source>
        <strain>129</strain>
        <tissue>Spleen</tissue>
    </source>
</reference>
<reference key="3">
    <citation type="journal article" date="2009" name="PLoS Biol.">
        <title>Lineage-specific biology revealed by a finished genome assembly of the mouse.</title>
        <authorList>
            <person name="Church D.M."/>
            <person name="Goodstadt L."/>
            <person name="Hillier L.W."/>
            <person name="Zody M.C."/>
            <person name="Goldstein S."/>
            <person name="She X."/>
            <person name="Bult C.J."/>
            <person name="Agarwala R."/>
            <person name="Cherry J.L."/>
            <person name="DiCuccio M."/>
            <person name="Hlavina W."/>
            <person name="Kapustin Y."/>
            <person name="Meric P."/>
            <person name="Maglott D."/>
            <person name="Birtle Z."/>
            <person name="Marques A.C."/>
            <person name="Graves T."/>
            <person name="Zhou S."/>
            <person name="Teague B."/>
            <person name="Potamousis K."/>
            <person name="Churas C."/>
            <person name="Place M."/>
            <person name="Herschleb J."/>
            <person name="Runnheim R."/>
            <person name="Forrest D."/>
            <person name="Amos-Landgraf J."/>
            <person name="Schwartz D.C."/>
            <person name="Cheng Z."/>
            <person name="Lindblad-Toh K."/>
            <person name="Eichler E.E."/>
            <person name="Ponting C.P."/>
        </authorList>
    </citation>
    <scope>NUCLEOTIDE SEQUENCE [LARGE SCALE GENOMIC DNA]</scope>
    <source>
        <strain>C57BL/6J</strain>
    </source>
</reference>
<dbReference type="EMBL" id="DQ119292">
    <property type="protein sequence ID" value="AAZ23789.1"/>
    <property type="molecule type" value="mRNA"/>
</dbReference>
<dbReference type="EMBL" id="AY513660">
    <property type="protein sequence ID" value="AAS82875.1"/>
    <property type="molecule type" value="mRNA"/>
</dbReference>
<dbReference type="EMBL" id="AC113490">
    <property type="status" value="NOT_ANNOTATED_CDS"/>
    <property type="molecule type" value="Genomic_DNA"/>
</dbReference>
<dbReference type="CCDS" id="CCDS15475.1"/>
<dbReference type="RefSeq" id="NP_001025155.2">
    <property type="nucleotide sequence ID" value="NM_001029984.2"/>
</dbReference>
<dbReference type="FunCoup" id="Q5DRQ8">
    <property type="interactions" value="376"/>
</dbReference>
<dbReference type="STRING" id="10090.ENSMUSP00000091895"/>
<dbReference type="GlyCosmos" id="Q5DRQ8">
    <property type="glycosylation" value="1 site, No reported glycans"/>
</dbReference>
<dbReference type="GlyGen" id="Q5DRQ8">
    <property type="glycosylation" value="1 site"/>
</dbReference>
<dbReference type="iPTMnet" id="Q5DRQ8"/>
<dbReference type="PhosphoSitePlus" id="Q5DRQ8"/>
<dbReference type="PaxDb" id="10090-ENSMUSP00000091895"/>
<dbReference type="Antibodypedia" id="34315">
    <property type="antibodies" value="175 antibodies from 20 providers"/>
</dbReference>
<dbReference type="DNASU" id="435653"/>
<dbReference type="Ensembl" id="ENSMUST00000094337.2">
    <property type="protein sequence ID" value="ENSMUSP00000091895.2"/>
    <property type="gene ID" value="ENSMUSG00000070524.2"/>
</dbReference>
<dbReference type="GeneID" id="435653"/>
<dbReference type="KEGG" id="mmu:435653"/>
<dbReference type="UCSC" id="uc007dmp.1">
    <property type="organism name" value="mouse"/>
</dbReference>
<dbReference type="AGR" id="MGI:3576487"/>
<dbReference type="CTD" id="127943"/>
<dbReference type="MGI" id="MGI:3576487">
    <property type="gene designation" value="Fcrlb"/>
</dbReference>
<dbReference type="VEuPathDB" id="HostDB:ENSMUSG00000070524"/>
<dbReference type="eggNOG" id="ENOG502SH8W">
    <property type="taxonomic scope" value="Eukaryota"/>
</dbReference>
<dbReference type="GeneTree" id="ENSGT01050000244808"/>
<dbReference type="HOGENOM" id="CLU_677141_0_0_1"/>
<dbReference type="InParanoid" id="Q5DRQ8"/>
<dbReference type="OMA" id="LEAYWCE"/>
<dbReference type="OrthoDB" id="6151406at2759"/>
<dbReference type="PhylomeDB" id="Q5DRQ8"/>
<dbReference type="TreeFam" id="TF351107"/>
<dbReference type="BioGRID-ORCS" id="435653">
    <property type="hits" value="0 hits in 78 CRISPR screens"/>
</dbReference>
<dbReference type="PRO" id="PR:Q5DRQ8"/>
<dbReference type="Proteomes" id="UP000000589">
    <property type="component" value="Chromosome 1"/>
</dbReference>
<dbReference type="RNAct" id="Q5DRQ8">
    <property type="molecule type" value="protein"/>
</dbReference>
<dbReference type="Bgee" id="ENSMUSG00000070524">
    <property type="expression patterns" value="Expressed in mesodermal cell in embryo and 12 other cell types or tissues"/>
</dbReference>
<dbReference type="GO" id="GO:0005737">
    <property type="term" value="C:cytoplasm"/>
    <property type="evidence" value="ECO:0000266"/>
    <property type="project" value="MGI"/>
</dbReference>
<dbReference type="GO" id="GO:0005783">
    <property type="term" value="C:endoplasmic reticulum"/>
    <property type="evidence" value="ECO:0007669"/>
    <property type="project" value="UniProtKB-SubCell"/>
</dbReference>
<dbReference type="GO" id="GO:0050777">
    <property type="term" value="P:negative regulation of immune response"/>
    <property type="evidence" value="ECO:0000315"/>
    <property type="project" value="MGI"/>
</dbReference>
<dbReference type="CDD" id="cd05753">
    <property type="entry name" value="Ig2_FcgammaR_like"/>
    <property type="match status" value="1"/>
</dbReference>
<dbReference type="FunFam" id="2.60.40.10:FF:000217">
    <property type="entry name" value="High affinity immunoglobulin gamma Fc receptor I"/>
    <property type="match status" value="1"/>
</dbReference>
<dbReference type="Gene3D" id="2.60.40.10">
    <property type="entry name" value="Immunoglobulins"/>
    <property type="match status" value="3"/>
</dbReference>
<dbReference type="InterPro" id="IPR007110">
    <property type="entry name" value="Ig-like_dom"/>
</dbReference>
<dbReference type="InterPro" id="IPR036179">
    <property type="entry name" value="Ig-like_dom_sf"/>
</dbReference>
<dbReference type="InterPro" id="IPR013783">
    <property type="entry name" value="Ig-like_fold"/>
</dbReference>
<dbReference type="InterPro" id="IPR050488">
    <property type="entry name" value="Ig_Fc_receptor"/>
</dbReference>
<dbReference type="InterPro" id="IPR003599">
    <property type="entry name" value="Ig_sub"/>
</dbReference>
<dbReference type="PANTHER" id="PTHR11481:SF94">
    <property type="entry name" value="FC RECEPTOR-LIKE B"/>
    <property type="match status" value="1"/>
</dbReference>
<dbReference type="PANTHER" id="PTHR11481">
    <property type="entry name" value="IMMUNOGLOBULIN FC RECEPTOR"/>
    <property type="match status" value="1"/>
</dbReference>
<dbReference type="Pfam" id="PF13895">
    <property type="entry name" value="Ig_2"/>
    <property type="match status" value="2"/>
</dbReference>
<dbReference type="SMART" id="SM00409">
    <property type="entry name" value="IG"/>
    <property type="match status" value="2"/>
</dbReference>
<dbReference type="SUPFAM" id="SSF48726">
    <property type="entry name" value="Immunoglobulin"/>
    <property type="match status" value="2"/>
</dbReference>
<dbReference type="PROSITE" id="PS50835">
    <property type="entry name" value="IG_LIKE"/>
    <property type="match status" value="1"/>
</dbReference>
<protein>
    <recommendedName>
        <fullName>Fc receptor-like B</fullName>
    </recommendedName>
    <alternativeName>
        <fullName>Fc receptor homolog expressed in B-cells protein 2</fullName>
        <shortName>FREB-2</shortName>
    </alternativeName>
    <alternativeName>
        <fullName>Fc receptor-like and mucin-like protein 2</fullName>
    </alternativeName>
    <alternativeName>
        <fullName>Fc receptor-like protein 2</fullName>
    </alternativeName>
    <alternativeName>
        <fullName>Fc receptor-related protein Y</fullName>
        <shortName>FcRY</shortName>
    </alternativeName>
</protein>
<accession>Q5DRQ8</accession>
<accession>F8VQL1</accession>
<proteinExistence type="evidence at transcript level"/>